<reference key="1">
    <citation type="journal article" date="2002" name="Mol. Microbiol.">
        <title>Genome sequence of Streptococcus agalactiae, a pathogen causing invasive neonatal disease.</title>
        <authorList>
            <person name="Glaser P."/>
            <person name="Rusniok C."/>
            <person name="Buchrieser C."/>
            <person name="Chevalier F."/>
            <person name="Frangeul L."/>
            <person name="Msadek T."/>
            <person name="Zouine M."/>
            <person name="Couve E."/>
            <person name="Lalioui L."/>
            <person name="Poyart C."/>
            <person name="Trieu-Cuot P."/>
            <person name="Kunst F."/>
        </authorList>
    </citation>
    <scope>NUCLEOTIDE SEQUENCE [LARGE SCALE GENOMIC DNA]</scope>
    <source>
        <strain>NEM316</strain>
    </source>
</reference>
<proteinExistence type="inferred from homology"/>
<keyword id="KW-0687">Ribonucleoprotein</keyword>
<keyword id="KW-0689">Ribosomal protein</keyword>
<dbReference type="EMBL" id="AL766843">
    <property type="protein sequence ID" value="CAD45702.1"/>
    <property type="molecule type" value="Genomic_DNA"/>
</dbReference>
<dbReference type="RefSeq" id="WP_001284518.1">
    <property type="nucleotide sequence ID" value="NC_004368.1"/>
</dbReference>
<dbReference type="SMR" id="P66344"/>
<dbReference type="GeneID" id="69900025"/>
<dbReference type="KEGG" id="san:rpsJ"/>
<dbReference type="eggNOG" id="COG0051">
    <property type="taxonomic scope" value="Bacteria"/>
</dbReference>
<dbReference type="HOGENOM" id="CLU_122625_1_3_9"/>
<dbReference type="Proteomes" id="UP000000823">
    <property type="component" value="Chromosome"/>
</dbReference>
<dbReference type="GO" id="GO:1990904">
    <property type="term" value="C:ribonucleoprotein complex"/>
    <property type="evidence" value="ECO:0007669"/>
    <property type="project" value="UniProtKB-KW"/>
</dbReference>
<dbReference type="GO" id="GO:0005840">
    <property type="term" value="C:ribosome"/>
    <property type="evidence" value="ECO:0007669"/>
    <property type="project" value="UniProtKB-KW"/>
</dbReference>
<dbReference type="GO" id="GO:0003735">
    <property type="term" value="F:structural constituent of ribosome"/>
    <property type="evidence" value="ECO:0007669"/>
    <property type="project" value="InterPro"/>
</dbReference>
<dbReference type="GO" id="GO:0000049">
    <property type="term" value="F:tRNA binding"/>
    <property type="evidence" value="ECO:0007669"/>
    <property type="project" value="UniProtKB-UniRule"/>
</dbReference>
<dbReference type="GO" id="GO:0006412">
    <property type="term" value="P:translation"/>
    <property type="evidence" value="ECO:0007669"/>
    <property type="project" value="UniProtKB-UniRule"/>
</dbReference>
<dbReference type="FunFam" id="3.30.70.600:FF:000001">
    <property type="entry name" value="30S ribosomal protein S10"/>
    <property type="match status" value="1"/>
</dbReference>
<dbReference type="Gene3D" id="3.30.70.600">
    <property type="entry name" value="Ribosomal protein S10 domain"/>
    <property type="match status" value="1"/>
</dbReference>
<dbReference type="HAMAP" id="MF_00508">
    <property type="entry name" value="Ribosomal_uS10"/>
    <property type="match status" value="1"/>
</dbReference>
<dbReference type="InterPro" id="IPR001848">
    <property type="entry name" value="Ribosomal_uS10"/>
</dbReference>
<dbReference type="InterPro" id="IPR018268">
    <property type="entry name" value="Ribosomal_uS10_CS"/>
</dbReference>
<dbReference type="InterPro" id="IPR027486">
    <property type="entry name" value="Ribosomal_uS10_dom"/>
</dbReference>
<dbReference type="InterPro" id="IPR036838">
    <property type="entry name" value="Ribosomal_uS10_dom_sf"/>
</dbReference>
<dbReference type="NCBIfam" id="NF001861">
    <property type="entry name" value="PRK00596.1"/>
    <property type="match status" value="1"/>
</dbReference>
<dbReference type="NCBIfam" id="TIGR01049">
    <property type="entry name" value="rpsJ_bact"/>
    <property type="match status" value="1"/>
</dbReference>
<dbReference type="PANTHER" id="PTHR11700">
    <property type="entry name" value="30S RIBOSOMAL PROTEIN S10 FAMILY MEMBER"/>
    <property type="match status" value="1"/>
</dbReference>
<dbReference type="Pfam" id="PF00338">
    <property type="entry name" value="Ribosomal_S10"/>
    <property type="match status" value="1"/>
</dbReference>
<dbReference type="PRINTS" id="PR00971">
    <property type="entry name" value="RIBOSOMALS10"/>
</dbReference>
<dbReference type="SMART" id="SM01403">
    <property type="entry name" value="Ribosomal_S10"/>
    <property type="match status" value="1"/>
</dbReference>
<dbReference type="SUPFAM" id="SSF54999">
    <property type="entry name" value="Ribosomal protein S10"/>
    <property type="match status" value="1"/>
</dbReference>
<dbReference type="PROSITE" id="PS00361">
    <property type="entry name" value="RIBOSOMAL_S10"/>
    <property type="match status" value="1"/>
</dbReference>
<name>RS10_STRA3</name>
<feature type="chain" id="PRO_0000146613" description="Small ribosomal subunit protein uS10">
    <location>
        <begin position="1"/>
        <end position="102"/>
    </location>
</feature>
<gene>
    <name evidence="1" type="primary">rpsJ</name>
    <name type="ordered locus">gbs0057</name>
</gene>
<protein>
    <recommendedName>
        <fullName evidence="1">Small ribosomal subunit protein uS10</fullName>
    </recommendedName>
    <alternativeName>
        <fullName evidence="2">30S ribosomal protein S10</fullName>
    </alternativeName>
</protein>
<organism>
    <name type="scientific">Streptococcus agalactiae serotype III (strain NEM316)</name>
    <dbReference type="NCBI Taxonomy" id="211110"/>
    <lineage>
        <taxon>Bacteria</taxon>
        <taxon>Bacillati</taxon>
        <taxon>Bacillota</taxon>
        <taxon>Bacilli</taxon>
        <taxon>Lactobacillales</taxon>
        <taxon>Streptococcaceae</taxon>
        <taxon>Streptococcus</taxon>
    </lineage>
</organism>
<accession>P66344</accession>
<accession>Q9A1X5</accession>
<comment type="function">
    <text evidence="1">Involved in the binding of tRNA to the ribosomes.</text>
</comment>
<comment type="subunit">
    <text evidence="1">Part of the 30S ribosomal subunit.</text>
</comment>
<comment type="similarity">
    <text evidence="1">Belongs to the universal ribosomal protein uS10 family.</text>
</comment>
<evidence type="ECO:0000255" key="1">
    <source>
        <dbReference type="HAMAP-Rule" id="MF_00508"/>
    </source>
</evidence>
<evidence type="ECO:0000305" key="2"/>
<sequence length="102" mass="11614">MANKKIRIRLKAYEHRTLDTAAEKIVETATRTGATVAGPVPLPTERSLYTIIRATHKYKDSREQFEMRTHKRLVDIINPTQKTVDALMKLDLPSGVNVEIKL</sequence>